<dbReference type="EMBL" id="D87215">
    <property type="protein sequence ID" value="BAA77454.1"/>
    <property type="molecule type" value="Genomic_DNA"/>
</dbReference>
<dbReference type="RefSeq" id="WP_138210330.1">
    <property type="nucleotide sequence ID" value="NZ_CBCRUQ010000005.1"/>
</dbReference>
<dbReference type="SMR" id="Q9X722"/>
<dbReference type="OrthoDB" id="9810350at2"/>
<dbReference type="GO" id="GO:0005886">
    <property type="term" value="C:plasma membrane"/>
    <property type="evidence" value="ECO:0007669"/>
    <property type="project" value="UniProtKB-SubCell"/>
</dbReference>
<dbReference type="GO" id="GO:0008381">
    <property type="term" value="F:mechanosensitive monoatomic ion channel activity"/>
    <property type="evidence" value="ECO:0007669"/>
    <property type="project" value="UniProtKB-UniRule"/>
</dbReference>
<dbReference type="FunFam" id="1.10.1200.120:FF:000001">
    <property type="entry name" value="Large-conductance mechanosensitive channel"/>
    <property type="match status" value="1"/>
</dbReference>
<dbReference type="Gene3D" id="1.10.1200.120">
    <property type="entry name" value="Large-conductance mechanosensitive channel, MscL, domain 1"/>
    <property type="match status" value="1"/>
</dbReference>
<dbReference type="HAMAP" id="MF_00115">
    <property type="entry name" value="MscL"/>
    <property type="match status" value="1"/>
</dbReference>
<dbReference type="InterPro" id="IPR019823">
    <property type="entry name" value="Mechanosensitive_channel_CS"/>
</dbReference>
<dbReference type="InterPro" id="IPR001185">
    <property type="entry name" value="MS_channel"/>
</dbReference>
<dbReference type="InterPro" id="IPR037673">
    <property type="entry name" value="MSC/AndL"/>
</dbReference>
<dbReference type="InterPro" id="IPR036019">
    <property type="entry name" value="MscL_channel"/>
</dbReference>
<dbReference type="NCBIfam" id="TIGR00220">
    <property type="entry name" value="mscL"/>
    <property type="match status" value="1"/>
</dbReference>
<dbReference type="NCBIfam" id="NF001843">
    <property type="entry name" value="PRK00567.1-4"/>
    <property type="match status" value="1"/>
</dbReference>
<dbReference type="NCBIfam" id="NF010560">
    <property type="entry name" value="PRK13955.1"/>
    <property type="match status" value="1"/>
</dbReference>
<dbReference type="PANTHER" id="PTHR30266:SF2">
    <property type="entry name" value="LARGE-CONDUCTANCE MECHANOSENSITIVE CHANNEL"/>
    <property type="match status" value="1"/>
</dbReference>
<dbReference type="PANTHER" id="PTHR30266">
    <property type="entry name" value="MECHANOSENSITIVE CHANNEL MSCL"/>
    <property type="match status" value="1"/>
</dbReference>
<dbReference type="Pfam" id="PF01741">
    <property type="entry name" value="MscL"/>
    <property type="match status" value="1"/>
</dbReference>
<dbReference type="PRINTS" id="PR01264">
    <property type="entry name" value="MECHCHANNEL"/>
</dbReference>
<dbReference type="SUPFAM" id="SSF81330">
    <property type="entry name" value="Gated mechanosensitive channel"/>
    <property type="match status" value="1"/>
</dbReference>
<dbReference type="PROSITE" id="PS01327">
    <property type="entry name" value="MSCL"/>
    <property type="match status" value="1"/>
</dbReference>
<evidence type="ECO:0000255" key="1">
    <source>
        <dbReference type="HAMAP-Rule" id="MF_00115"/>
    </source>
</evidence>
<evidence type="ECO:0000305" key="2"/>
<reference key="1">
    <citation type="journal article" date="1999" name="J. Bacteriol.">
        <title>Gene duplication and multiplicity of collagenases in Clostridium histolyticum.</title>
        <authorList>
            <person name="Matsushita O."/>
            <person name="Jung C.-M."/>
            <person name="Katayama S."/>
            <person name="Minami J."/>
            <person name="Takahashi Y."/>
            <person name="Okabe A."/>
        </authorList>
    </citation>
    <scope>NUCLEOTIDE SEQUENCE [GENOMIC DNA]</scope>
    <source>
        <strain>ATCC 19401 / DSM 2158 / JCM 1403 / NCIMB 503 / NCTC 503</strain>
    </source>
</reference>
<feature type="chain" id="PRO_0000192437" description="Large-conductance mechanosensitive channel">
    <location>
        <begin position="1"/>
        <end position="133"/>
    </location>
</feature>
<feature type="transmembrane region" description="Helical" evidence="1">
    <location>
        <begin position="8"/>
        <end position="28"/>
    </location>
</feature>
<feature type="transmembrane region" description="Helical" evidence="1">
    <location>
        <begin position="30"/>
        <end position="50"/>
    </location>
</feature>
<feature type="transmembrane region" description="Helical" evidence="1">
    <location>
        <begin position="73"/>
        <end position="93"/>
    </location>
</feature>
<protein>
    <recommendedName>
        <fullName evidence="1">Large-conductance mechanosensitive channel</fullName>
    </recommendedName>
</protein>
<comment type="function">
    <text evidence="1">Channel that opens in response to stretch forces in the membrane lipid bilayer. May participate in the regulation of osmotic pressure changes within the cell.</text>
</comment>
<comment type="subunit">
    <text evidence="1">Homopentamer.</text>
</comment>
<comment type="subcellular location">
    <subcellularLocation>
        <location evidence="1">Cell membrane</location>
        <topology evidence="1">Multi-pass membrane protein</topology>
    </subcellularLocation>
</comment>
<comment type="similarity">
    <text evidence="1 2">Belongs to the MscL family.</text>
</comment>
<name>MSCL_HATHI</name>
<organism>
    <name type="scientific">Hathewaya histolytica</name>
    <name type="common">Clostridium histolyticum</name>
    <dbReference type="NCBI Taxonomy" id="1498"/>
    <lineage>
        <taxon>Bacteria</taxon>
        <taxon>Bacillati</taxon>
        <taxon>Bacillota</taxon>
        <taxon>Clostridia</taxon>
        <taxon>Eubacteriales</taxon>
        <taxon>Clostridiaceae</taxon>
        <taxon>Hathewaya</taxon>
    </lineage>
</organism>
<sequence>MWKDFKEFAMKGNVVDLAVGVIIGGAFGKIVTSLVNDVIMPILGLILGGINFTSAKLTLHGLNSEKPLTLNYGQFIQNILDFLIISFSIFLFIRLINRFKRKEEAVEEAKIPEISREEELLGEIRDLLKEKNK</sequence>
<gene>
    <name evidence="1" type="primary">mscL</name>
</gene>
<keyword id="KW-1003">Cell membrane</keyword>
<keyword id="KW-0407">Ion channel</keyword>
<keyword id="KW-0406">Ion transport</keyword>
<keyword id="KW-0472">Membrane</keyword>
<keyword id="KW-0812">Transmembrane</keyword>
<keyword id="KW-1133">Transmembrane helix</keyword>
<keyword id="KW-0813">Transport</keyword>
<proteinExistence type="inferred from homology"/>
<accession>Q9X722</accession>